<name>R1A_CVPPU</name>
<accession>P0C6V2</accession>
<accession>Q9IW06</accession>
<comment type="function">
    <text evidence="1">The papain-like proteinase 1 (PLP1) and papain-like proteinase 2 (PLP2) are responsible for the cleavages located at the N-terminus of the replicase polyprotein. In addition, PLP2 possesses a deubiquitinating/deISGylating activity and processes both 'Lys-48'- and 'Lys-63'-linked polyubiquitin chains from cellular substrates. PLP2 also antagonizes innate immune induction of type I interferon by blocking the nuclear translocation of host IRF-3 (By similarity).</text>
</comment>
<comment type="function">
    <molecule>3C-like proteinase</molecule>
    <text>Responsible for the majority of cleavages as it cleaves the C-terminus of replicase polyprotein at 11 sites. Recognizes substrates containing the core sequence [ILMVF]-Q-|-[SAGC]. Inhibited by the substrate-analog Cbz-Val-Asn-Ser-Thr-Leu-Gln-CMK.</text>
</comment>
<comment type="function">
    <text evidence="1">Nsp7-nsp8 hexadecamer may possibly confer processivity to the polymerase, maybe by binding to dsRNA or by producing primers utilized by the latter.</text>
</comment>
<comment type="function">
    <text evidence="1">Nsp9 is a ssRNA-binding protein.</text>
</comment>
<comment type="catalytic activity">
    <reaction>
        <text>Thiol-dependent hydrolysis of ester, thioester, amide, peptide and isopeptide bonds formed by the C-terminal Gly of ubiquitin (a 76-residue protein attached to proteins as an intracellular targeting signal).</text>
        <dbReference type="EC" id="3.4.19.12"/>
    </reaction>
</comment>
<comment type="subunit">
    <text evidence="1">3CL-PRO exists as monomer and homodimer. Eight copies of nsp7 and eight copies of nsp8 assemble to form a heterohexadecamer. Nsp9 is a dimer. Nsp10 forms a dodecamer (By similarity).</text>
</comment>
<comment type="subcellular location">
    <molecule>Non-structural protein 3</molecule>
    <subcellularLocation>
        <location evidence="20">Host membrane</location>
        <topology evidence="20">Multi-pass membrane protein</topology>
    </subcellularLocation>
</comment>
<comment type="subcellular location">
    <molecule>Non-structural protein 4</molecule>
    <subcellularLocation>
        <location evidence="20">Host membrane</location>
        <topology evidence="20">Multi-pass membrane protein</topology>
    </subcellularLocation>
</comment>
<comment type="subcellular location">
    <molecule>Non-structural protein 6</molecule>
    <subcellularLocation>
        <location evidence="20">Host membrane</location>
        <topology evidence="20">Multi-pass membrane protein</topology>
    </subcellularLocation>
</comment>
<comment type="subcellular location">
    <molecule>Non-structural protein 7</molecule>
    <subcellularLocation>
        <location evidence="1">Host cytoplasm</location>
        <location evidence="1">Host perinuclear region</location>
    </subcellularLocation>
    <text evidence="1">nsp7, nsp8, nsp9 and nsp10 are localized in cytoplasmic foci, largely perinuclear. Late in infection, they merge into confluent complexes (By similarity).</text>
</comment>
<comment type="subcellular location">
    <molecule>Non-structural protein 8</molecule>
    <subcellularLocation>
        <location evidence="1">Host cytoplasm</location>
        <location evidence="1">Host perinuclear region</location>
    </subcellularLocation>
    <text evidence="1">nsp7, nsp8, nsp9 and nsp10 are localized in cytoplasmic foci, largely perinuclear. Late in infection, they merge into confluent complexes (By similarity).</text>
</comment>
<comment type="subcellular location">
    <molecule>Non-structural protein 9</molecule>
    <subcellularLocation>
        <location evidence="1">Host cytoplasm</location>
        <location evidence="1">Host perinuclear region</location>
    </subcellularLocation>
    <text evidence="1">nsp7, nsp8, nsp9 and nsp10 are localized in cytoplasmic foci, largely perinuclear. Late in infection, they merge into confluent complexes (By similarity).</text>
</comment>
<comment type="subcellular location">
    <molecule>Non-structural protein 10</molecule>
    <subcellularLocation>
        <location evidence="1">Host cytoplasm</location>
        <location evidence="1">Host perinuclear region</location>
    </subcellularLocation>
    <text evidence="1">nsp7, nsp8, nsp9 and nsp10 are localized in cytoplasmic foci, largely perinuclear. Late in infection, they merge into confluent complexes (By similarity).</text>
</comment>
<comment type="alternative products">
    <event type="ribosomal frameshifting"/>
    <isoform>
        <id>P0C6V2-1</id>
        <name>Replicase polyprotein 1a</name>
        <name>pp1a</name>
        <name>ORF1a polyprotein</name>
        <sequence type="displayed"/>
    </isoform>
    <isoform>
        <id>P0C6Y5-1</id>
        <name>Replicase polyprotein 1ab</name>
        <name>pp1ab</name>
        <sequence type="external"/>
    </isoform>
</comment>
<comment type="domain">
    <text>The hydrophobic domains (HD) could mediate the membrane association of the replication complex and thereby alter the architecture of the host cell membrane.</text>
</comment>
<comment type="PTM">
    <text evidence="19">Specific enzymatic cleavages in vivo by its own proteases yield mature proteins. 3CL-PRO is autocatalytically processed.</text>
</comment>
<comment type="miscellaneous">
    <molecule>Isoform Replicase polyprotein 1a</molecule>
    <text>Produced by conventional translation.</text>
</comment>
<comment type="similarity">
    <text evidence="20">Belongs to the coronaviruses polyprotein 1ab family.</text>
</comment>
<reference key="1">
    <citation type="journal article" date="1995" name="Virology">
        <title>Complete sequence (20 kilobases) of the polyprotein-encoding gene 1 of transmissible gastroenteritis virus.</title>
        <authorList>
            <person name="Eleouet J."/>
            <person name="Rasschaert D."/>
            <person name="Lambert P."/>
            <person name="Levy L."/>
            <person name="Vende P."/>
            <person name="Laude H."/>
        </authorList>
    </citation>
    <scope>NUCLEOTIDE SEQUENCE [MRNA]</scope>
    <source>
        <strain>Isolate Purdue-115</strain>
    </source>
</reference>
<reference key="2">
    <citation type="journal article" date="2000" name="Proc. Natl. Acad. Sci. U.S.A.">
        <title>Engineering the largest RNA virus genome as an infectious bacterial artificial chromosome.</title>
        <authorList>
            <person name="Almazan F."/>
            <person name="Gonzalez J.M."/>
            <person name="Penzes Z."/>
            <person name="Izeta A."/>
            <person name="Calvo E."/>
            <person name="Plana-Duran J."/>
            <person name="Enjuanes L."/>
        </authorList>
    </citation>
    <scope>NUCLEOTIDE SEQUENCE [GENOMIC RNA]</scope>
    <source>
        <strain>Isolate PUR46-MAD</strain>
    </source>
</reference>
<reference key="3">
    <citation type="journal article" date="2002" name="J. Gen. Virol.">
        <title>Conservation of substrate specificities among coronavirus main proteases.</title>
        <authorList>
            <person name="Hegyi A."/>
            <person name="Ziebuhr J."/>
        </authorList>
    </citation>
    <scope>PROTEOLYTIC PROCESSING OF POLYPROTEIN</scope>
    <source>
        <strain>Isolate Purdue-115</strain>
    </source>
</reference>
<reference key="4">
    <citation type="journal article" date="2002" name="EMBO J.">
        <title>Structure of coronavirus main proteinase reveals combination of a chymotrypsin fold with an extra alpha-helical domain.</title>
        <authorList>
            <person name="Anand K."/>
            <person name="Palm G.J."/>
            <person name="Mesters J.R."/>
            <person name="Siddell S.G."/>
            <person name="Ziebuhr J."/>
            <person name="Hilgenfeld R."/>
        </authorList>
    </citation>
    <scope>X-RAY CRYSTALLOGRAPHY (1.96 ANGSTROMS) OF 2879-3180</scope>
</reference>
<reference key="5">
    <citation type="journal article" date="2003" name="Science">
        <title>Coronavirus main proteinase (3CLpro) structure: basis for design of anti-SARS drugs.</title>
        <authorList>
            <person name="Anand K."/>
            <person name="Ziebuhr J."/>
            <person name="Wadhwani P."/>
            <person name="Mesters J.R."/>
            <person name="Hilgenfeld R."/>
        </authorList>
    </citation>
    <scope>X-RAY CRYSTALLOGRAPHY (2.37 ANGSTROMS) OF 2879-3180 COMPLEXED WITH THE SUBSTRATE-ANALOG HEXAPEPTIDYL CMK</scope>
</reference>
<evidence type="ECO:0000250" key="1"/>
<evidence type="ECO:0000255" key="2"/>
<evidence type="ECO:0000255" key="3">
    <source>
        <dbReference type="PROSITE-ProRule" id="PRU00214"/>
    </source>
</evidence>
<evidence type="ECO:0000255" key="4">
    <source>
        <dbReference type="PROSITE-ProRule" id="PRU00444"/>
    </source>
</evidence>
<evidence type="ECO:0000255" key="5">
    <source>
        <dbReference type="PROSITE-ProRule" id="PRU00490"/>
    </source>
</evidence>
<evidence type="ECO:0000255" key="6">
    <source>
        <dbReference type="PROSITE-ProRule" id="PRU00772"/>
    </source>
</evidence>
<evidence type="ECO:0000255" key="7">
    <source>
        <dbReference type="PROSITE-ProRule" id="PRU01291"/>
    </source>
</evidence>
<evidence type="ECO:0000255" key="8">
    <source>
        <dbReference type="PROSITE-ProRule" id="PRU01294"/>
    </source>
</evidence>
<evidence type="ECO:0000255" key="9">
    <source>
        <dbReference type="PROSITE-ProRule" id="PRU01295"/>
    </source>
</evidence>
<evidence type="ECO:0000255" key="10">
    <source>
        <dbReference type="PROSITE-ProRule" id="PRU01296"/>
    </source>
</evidence>
<evidence type="ECO:0000255" key="11">
    <source>
        <dbReference type="PROSITE-ProRule" id="PRU01297"/>
    </source>
</evidence>
<evidence type="ECO:0000255" key="12">
    <source>
        <dbReference type="PROSITE-ProRule" id="PRU01307"/>
    </source>
</evidence>
<evidence type="ECO:0000255" key="13">
    <source>
        <dbReference type="PROSITE-ProRule" id="PRU01333"/>
    </source>
</evidence>
<evidence type="ECO:0000255" key="14">
    <source>
        <dbReference type="PROSITE-ProRule" id="PRU01334"/>
    </source>
</evidence>
<evidence type="ECO:0000255" key="15">
    <source>
        <dbReference type="PROSITE-ProRule" id="PRU01335"/>
    </source>
</evidence>
<evidence type="ECO:0000255" key="16">
    <source>
        <dbReference type="PROSITE-ProRule" id="PRU01336"/>
    </source>
</evidence>
<evidence type="ECO:0000255" key="17">
    <source>
        <dbReference type="PROSITE-ProRule" id="PRU01337"/>
    </source>
</evidence>
<evidence type="ECO:0000256" key="18">
    <source>
        <dbReference type="SAM" id="MobiDB-lite"/>
    </source>
</evidence>
<evidence type="ECO:0000269" key="19">
    <source>
    </source>
</evidence>
<evidence type="ECO:0000305" key="20"/>
<evidence type="ECO:0007829" key="21">
    <source>
        <dbReference type="PDB" id="3MP2"/>
    </source>
</evidence>
<evidence type="ECO:0007829" key="22">
    <source>
        <dbReference type="PDB" id="3ZBD"/>
    </source>
</evidence>
<evidence type="ECO:0007829" key="23">
    <source>
        <dbReference type="PDB" id="4F49"/>
    </source>
</evidence>
<proteinExistence type="evidence at protein level"/>
<dbReference type="EC" id="3.4.19.12"/>
<dbReference type="EC" id="3.4.22.-"/>
<dbReference type="EMBL" id="Z34093">
    <property type="protein sequence ID" value="CAA83979.1"/>
    <property type="molecule type" value="mRNA"/>
</dbReference>
<dbReference type="EMBL" id="AJ271965">
    <property type="protein sequence ID" value="CAB91144.1"/>
    <property type="molecule type" value="Genomic_RNA"/>
</dbReference>
<dbReference type="PDB" id="1LVO">
    <property type="method" value="X-ray"/>
    <property type="resolution" value="1.96 A"/>
    <property type="chains" value="A/B/C/D/E/F=2879-3180"/>
</dbReference>
<dbReference type="PDB" id="1P9U">
    <property type="method" value="X-ray"/>
    <property type="resolution" value="2.37 A"/>
    <property type="chains" value="A/B/C/D/E/F=2879-3180"/>
</dbReference>
<dbReference type="PDB" id="2AMP">
    <property type="method" value="X-ray"/>
    <property type="resolution" value="2.70 A"/>
    <property type="chains" value="A/B=2879-3180"/>
</dbReference>
<dbReference type="PDB" id="3MP2">
    <property type="method" value="X-ray"/>
    <property type="resolution" value="2.50 A"/>
    <property type="chains" value="A=1071-1281"/>
</dbReference>
<dbReference type="PDB" id="3ZBD">
    <property type="method" value="X-ray"/>
    <property type="resolution" value="1.49 A"/>
    <property type="chains" value="A/B=1-105"/>
</dbReference>
<dbReference type="PDB" id="4F49">
    <property type="method" value="X-ray"/>
    <property type="resolution" value="2.25 A"/>
    <property type="chains" value="A/B/C/D=2879-3181"/>
</dbReference>
<dbReference type="PDB" id="6IVD">
    <property type="method" value="X-ray"/>
    <property type="resolution" value="1.98 A"/>
    <property type="chains" value="A/B=1-105"/>
</dbReference>
<dbReference type="PDBsum" id="1LVO"/>
<dbReference type="PDBsum" id="1P9U"/>
<dbReference type="PDBsum" id="2AMP"/>
<dbReference type="PDBsum" id="3MP2"/>
<dbReference type="PDBsum" id="3ZBD"/>
<dbReference type="PDBsum" id="4F49"/>
<dbReference type="PDBsum" id="6IVD"/>
<dbReference type="SMR" id="P0C6V2"/>
<dbReference type="MEROPS" id="C30.004"/>
<dbReference type="BRENDA" id="3.4.22.66">
    <property type="organism ID" value="4985"/>
</dbReference>
<dbReference type="BRENDA" id="3.4.22.B14">
    <property type="organism ID" value="4985"/>
</dbReference>
<dbReference type="EvolutionaryTrace" id="P0C6V2"/>
<dbReference type="Proteomes" id="UP000001440">
    <property type="component" value="Segment"/>
</dbReference>
<dbReference type="GO" id="GO:0033644">
    <property type="term" value="C:host cell membrane"/>
    <property type="evidence" value="ECO:0007669"/>
    <property type="project" value="UniProtKB-SubCell"/>
</dbReference>
<dbReference type="GO" id="GO:0044220">
    <property type="term" value="C:host cell perinuclear region of cytoplasm"/>
    <property type="evidence" value="ECO:0007669"/>
    <property type="project" value="UniProtKB-SubCell"/>
</dbReference>
<dbReference type="GO" id="GO:0016020">
    <property type="term" value="C:membrane"/>
    <property type="evidence" value="ECO:0007669"/>
    <property type="project" value="UniProtKB-KW"/>
</dbReference>
<dbReference type="GO" id="GO:0004843">
    <property type="term" value="F:cysteine-type deubiquitinase activity"/>
    <property type="evidence" value="ECO:0007669"/>
    <property type="project" value="UniProtKB-EC"/>
</dbReference>
<dbReference type="GO" id="GO:0004197">
    <property type="term" value="F:cysteine-type endopeptidase activity"/>
    <property type="evidence" value="ECO:0007669"/>
    <property type="project" value="InterPro"/>
</dbReference>
<dbReference type="GO" id="GO:0008242">
    <property type="term" value="F:omega peptidase activity"/>
    <property type="evidence" value="ECO:0007669"/>
    <property type="project" value="InterPro"/>
</dbReference>
<dbReference type="GO" id="GO:0003723">
    <property type="term" value="F:RNA binding"/>
    <property type="evidence" value="ECO:0007669"/>
    <property type="project" value="UniProtKB-KW"/>
</dbReference>
<dbReference type="GO" id="GO:0016740">
    <property type="term" value="F:transferase activity"/>
    <property type="evidence" value="ECO:0007669"/>
    <property type="project" value="InterPro"/>
</dbReference>
<dbReference type="GO" id="GO:0008270">
    <property type="term" value="F:zinc ion binding"/>
    <property type="evidence" value="ECO:0007669"/>
    <property type="project" value="UniProtKB-KW"/>
</dbReference>
<dbReference type="GO" id="GO:0006508">
    <property type="term" value="P:proteolysis"/>
    <property type="evidence" value="ECO:0007669"/>
    <property type="project" value="UniProtKB-KW"/>
</dbReference>
<dbReference type="GO" id="GO:0010506">
    <property type="term" value="P:regulation of autophagy"/>
    <property type="evidence" value="ECO:0007669"/>
    <property type="project" value="InterPro"/>
</dbReference>
<dbReference type="GO" id="GO:0039520">
    <property type="term" value="P:symbiont-mediated activation of host autophagy"/>
    <property type="evidence" value="ECO:0007669"/>
    <property type="project" value="UniProtKB-KW"/>
</dbReference>
<dbReference type="GO" id="GO:0039648">
    <property type="term" value="P:symbiont-mediated perturbation of host ubiquitin-like protein modification"/>
    <property type="evidence" value="ECO:0007669"/>
    <property type="project" value="UniProtKB-KW"/>
</dbReference>
<dbReference type="GO" id="GO:0039548">
    <property type="term" value="P:symbiont-mediated suppression of host cytoplasmic pattern recognition receptor signaling pathway via inhibition of IRF3 activity"/>
    <property type="evidence" value="ECO:0007669"/>
    <property type="project" value="UniProtKB-KW"/>
</dbReference>
<dbReference type="GO" id="GO:0019079">
    <property type="term" value="P:viral genome replication"/>
    <property type="evidence" value="ECO:0007669"/>
    <property type="project" value="InterPro"/>
</dbReference>
<dbReference type="GO" id="GO:0019082">
    <property type="term" value="P:viral protein processing"/>
    <property type="evidence" value="ECO:0007669"/>
    <property type="project" value="InterPro"/>
</dbReference>
<dbReference type="GO" id="GO:0075523">
    <property type="term" value="P:viral translational frameshifting"/>
    <property type="evidence" value="ECO:0007669"/>
    <property type="project" value="UniProtKB-KW"/>
</dbReference>
<dbReference type="CDD" id="cd21901">
    <property type="entry name" value="alpha_betaCoV_Nsp10"/>
    <property type="match status" value="1"/>
</dbReference>
<dbReference type="CDD" id="cd21558">
    <property type="entry name" value="alphaCoV-Nsp6"/>
    <property type="match status" value="1"/>
</dbReference>
<dbReference type="CDD" id="cd21514">
    <property type="entry name" value="alphaCoV_Nsp2_HCoV-229E-like"/>
    <property type="match status" value="1"/>
</dbReference>
<dbReference type="CDD" id="cd21665">
    <property type="entry name" value="alphaCoV_Nsp5_Mpro"/>
    <property type="match status" value="1"/>
</dbReference>
<dbReference type="CDD" id="cd21826">
    <property type="entry name" value="alphaCoV_Nsp7"/>
    <property type="match status" value="1"/>
</dbReference>
<dbReference type="CDD" id="cd21830">
    <property type="entry name" value="alphaCoV_Nsp8"/>
    <property type="match status" value="1"/>
</dbReference>
<dbReference type="CDD" id="cd21897">
    <property type="entry name" value="alphaCoV_Nsp9"/>
    <property type="match status" value="1"/>
</dbReference>
<dbReference type="CDD" id="cd21731">
    <property type="entry name" value="alphaCoV_PLPro"/>
    <property type="match status" value="1"/>
</dbReference>
<dbReference type="CDD" id="cd21473">
    <property type="entry name" value="cv_Nsp4_TM"/>
    <property type="match status" value="1"/>
</dbReference>
<dbReference type="CDD" id="cd21557">
    <property type="entry name" value="Macro_X_Nsp3-like"/>
    <property type="match status" value="1"/>
</dbReference>
<dbReference type="CDD" id="cd21687">
    <property type="entry name" value="TGEV-like_alphaCoV_Nsp1"/>
    <property type="match status" value="1"/>
</dbReference>
<dbReference type="CDD" id="cd21712">
    <property type="entry name" value="TM_Y_alphaCoV_Nsp3_C"/>
    <property type="match status" value="1"/>
</dbReference>
<dbReference type="Gene3D" id="1.10.8.1190">
    <property type="match status" value="2"/>
</dbReference>
<dbReference type="Gene3D" id="3.10.20.540">
    <property type="match status" value="1"/>
</dbReference>
<dbReference type="Gene3D" id="6.10.140.2090">
    <property type="match status" value="1"/>
</dbReference>
<dbReference type="Gene3D" id="1.10.150.420">
    <property type="entry name" value="Coronavirus nonstructural protein 4 C-terminus"/>
    <property type="match status" value="1"/>
</dbReference>
<dbReference type="Gene3D" id="3.40.220.10">
    <property type="entry name" value="Leucine Aminopeptidase, subunit E, domain 1"/>
    <property type="match status" value="1"/>
</dbReference>
<dbReference type="Gene3D" id="1.10.1840.10">
    <property type="entry name" value="main proteinase (3clpro) structure, domain 3"/>
    <property type="match status" value="1"/>
</dbReference>
<dbReference type="Gene3D" id="1.10.8.370">
    <property type="entry name" value="nsp7 replicase"/>
    <property type="match status" value="1"/>
</dbReference>
<dbReference type="Gene3D" id="3.30.70.3540">
    <property type="entry name" value="Nsp8 replicase, head domain"/>
    <property type="match status" value="1"/>
</dbReference>
<dbReference type="Gene3D" id="2.40.10.250">
    <property type="entry name" value="Replicase NSP9"/>
    <property type="match status" value="1"/>
</dbReference>
<dbReference type="Gene3D" id="2.30.30.1000">
    <property type="entry name" value="Replicase polyprotein 1a"/>
    <property type="match status" value="1"/>
</dbReference>
<dbReference type="Gene3D" id="2.40.10.10">
    <property type="entry name" value="Trypsin-like serine proteases"/>
    <property type="match status" value="2"/>
</dbReference>
<dbReference type="InterPro" id="IPR032039">
    <property type="entry name" value="A-CoV_nsp1"/>
</dbReference>
<dbReference type="InterPro" id="IPR038634">
    <property type="entry name" value="A-CoV_nsp1_sf"/>
</dbReference>
<dbReference type="InterPro" id="IPR046443">
    <property type="entry name" value="a/bCoV_NSP1_glob"/>
</dbReference>
<dbReference type="InterPro" id="IPR043613">
    <property type="entry name" value="CoV_NSP2_C"/>
</dbReference>
<dbReference type="InterPro" id="IPR047573">
    <property type="entry name" value="CoV_NSP2_M"/>
</dbReference>
<dbReference type="InterPro" id="IPR049894">
    <property type="entry name" value="COV_NSP3_3ECTO"/>
</dbReference>
<dbReference type="InterPro" id="IPR043611">
    <property type="entry name" value="CoV_NSP3_C"/>
</dbReference>
<dbReference type="InterPro" id="IPR047566">
    <property type="entry name" value="CoV_NSP3_Y"/>
</dbReference>
<dbReference type="InterPro" id="IPR032505">
    <property type="entry name" value="CoV_NSP4_C"/>
</dbReference>
<dbReference type="InterPro" id="IPR043612">
    <property type="entry name" value="CoV_NSP4_N"/>
</dbReference>
<dbReference type="InterPro" id="IPR002589">
    <property type="entry name" value="Macro_dom"/>
</dbReference>
<dbReference type="InterPro" id="IPR043472">
    <property type="entry name" value="Macro_dom-like"/>
</dbReference>
<dbReference type="InterPro" id="IPR044371">
    <property type="entry name" value="Macro_X_NSP3-like"/>
</dbReference>
<dbReference type="InterPro" id="IPR036333">
    <property type="entry name" value="NSP10_sf_CoV"/>
</dbReference>
<dbReference type="InterPro" id="IPR044385">
    <property type="entry name" value="NSP2_HCoV-229E-like"/>
</dbReference>
<dbReference type="InterPro" id="IPR043615">
    <property type="entry name" value="NSP2_N_CoV"/>
</dbReference>
<dbReference type="InterPro" id="IPR044357">
    <property type="entry name" value="NSP3_Ubl1_dom_CoV"/>
</dbReference>
<dbReference type="InterPro" id="IPR044353">
    <property type="entry name" value="Nsp3_Ubl2_dom_CoV"/>
</dbReference>
<dbReference type="InterPro" id="IPR038123">
    <property type="entry name" value="NSP4_C_sf_CoV"/>
</dbReference>
<dbReference type="InterPro" id="IPR044309">
    <property type="entry name" value="NSP5_Mpro_alphaCoV"/>
</dbReference>
<dbReference type="InterPro" id="IPR044369">
    <property type="entry name" value="NSP6_alphaCoV"/>
</dbReference>
<dbReference type="InterPro" id="IPR043610">
    <property type="entry name" value="NSP6_CoV"/>
</dbReference>
<dbReference type="InterPro" id="IPR014828">
    <property type="entry name" value="NSP7_CoV"/>
</dbReference>
<dbReference type="InterPro" id="IPR037204">
    <property type="entry name" value="NSP7_sf_CoV"/>
</dbReference>
<dbReference type="InterPro" id="IPR014829">
    <property type="entry name" value="NSP8_CoV"/>
</dbReference>
<dbReference type="InterPro" id="IPR037230">
    <property type="entry name" value="NSP8_sf_CoV"/>
</dbReference>
<dbReference type="InterPro" id="IPR014822">
    <property type="entry name" value="NSP9_CoV"/>
</dbReference>
<dbReference type="InterPro" id="IPR036499">
    <property type="entry name" value="NSP9_sf_CoV"/>
</dbReference>
<dbReference type="InterPro" id="IPR013016">
    <property type="entry name" value="Peptidase_C16_CoV"/>
</dbReference>
<dbReference type="InterPro" id="IPR008740">
    <property type="entry name" value="Peptidase_C30_CoV"/>
</dbReference>
<dbReference type="InterPro" id="IPR043477">
    <property type="entry name" value="Peptidase_C30_dom3_CoV"/>
</dbReference>
<dbReference type="InterPro" id="IPR009003">
    <property type="entry name" value="Peptidase_S1_PA"/>
</dbReference>
<dbReference type="InterPro" id="IPR043504">
    <property type="entry name" value="Peptidase_S1_PA_chymotrypsin"/>
</dbReference>
<dbReference type="InterPro" id="IPR043177">
    <property type="entry name" value="PLpro_N_sf_CoV"/>
</dbReference>
<dbReference type="InterPro" id="IPR043178">
    <property type="entry name" value="PLpro_thumb_sf_CoV"/>
</dbReference>
<dbReference type="InterPro" id="IPR018995">
    <property type="entry name" value="RNA_synth_NSP10_CoV"/>
</dbReference>
<dbReference type="Pfam" id="PF16688">
    <property type="entry name" value="CNV-Replicase_N"/>
    <property type="match status" value="1"/>
</dbReference>
<dbReference type="Pfam" id="PF09401">
    <property type="entry name" value="CoV_NSP10"/>
    <property type="match status" value="1"/>
</dbReference>
<dbReference type="Pfam" id="PF19212">
    <property type="entry name" value="CoV_NSP2_C"/>
    <property type="match status" value="2"/>
</dbReference>
<dbReference type="Pfam" id="PF19211">
    <property type="entry name" value="CoV_NSP2_N"/>
    <property type="match status" value="1"/>
</dbReference>
<dbReference type="Pfam" id="PF19218">
    <property type="entry name" value="CoV_NSP3_C"/>
    <property type="match status" value="1"/>
</dbReference>
<dbReference type="Pfam" id="PF16348">
    <property type="entry name" value="CoV_NSP4_C"/>
    <property type="match status" value="1"/>
</dbReference>
<dbReference type="Pfam" id="PF19217">
    <property type="entry name" value="CoV_NSP4_N"/>
    <property type="match status" value="1"/>
</dbReference>
<dbReference type="Pfam" id="PF19213">
    <property type="entry name" value="CoV_NSP6"/>
    <property type="match status" value="1"/>
</dbReference>
<dbReference type="Pfam" id="PF08716">
    <property type="entry name" value="CoV_NSP7"/>
    <property type="match status" value="1"/>
</dbReference>
<dbReference type="Pfam" id="PF08717">
    <property type="entry name" value="CoV_NSP8"/>
    <property type="match status" value="1"/>
</dbReference>
<dbReference type="Pfam" id="PF08710">
    <property type="entry name" value="CoV_NSP9"/>
    <property type="match status" value="1"/>
</dbReference>
<dbReference type="Pfam" id="PF08715">
    <property type="entry name" value="CoV_peptidase"/>
    <property type="match status" value="2"/>
</dbReference>
<dbReference type="Pfam" id="PF01661">
    <property type="entry name" value="Macro"/>
    <property type="match status" value="1"/>
</dbReference>
<dbReference type="Pfam" id="PF05409">
    <property type="entry name" value="Peptidase_C30"/>
    <property type="match status" value="1"/>
</dbReference>
<dbReference type="SMART" id="SM00506">
    <property type="entry name" value="A1pp"/>
    <property type="match status" value="1"/>
</dbReference>
<dbReference type="SUPFAM" id="SSF144246">
    <property type="entry name" value="Coronavirus NSP10-like"/>
    <property type="match status" value="2"/>
</dbReference>
<dbReference type="SUPFAM" id="SSF140367">
    <property type="entry name" value="Coronavirus NSP7-like"/>
    <property type="match status" value="1"/>
</dbReference>
<dbReference type="SUPFAM" id="SSF143076">
    <property type="entry name" value="Coronavirus NSP8-like"/>
    <property type="match status" value="1"/>
</dbReference>
<dbReference type="SUPFAM" id="SSF52949">
    <property type="entry name" value="Macro domain-like"/>
    <property type="match status" value="1"/>
</dbReference>
<dbReference type="SUPFAM" id="SSF101816">
    <property type="entry name" value="Replicase NSP9"/>
    <property type="match status" value="1"/>
</dbReference>
<dbReference type="SUPFAM" id="SSF50494">
    <property type="entry name" value="Trypsin-like serine proteases"/>
    <property type="match status" value="1"/>
</dbReference>
<dbReference type="PROSITE" id="PS51993">
    <property type="entry name" value="COV_3ECTO"/>
    <property type="match status" value="1"/>
</dbReference>
<dbReference type="PROSITE" id="PS51952">
    <property type="entry name" value="COV_EXON_MTASE_COACT"/>
    <property type="match status" value="1"/>
</dbReference>
<dbReference type="PROSITE" id="PS51962">
    <property type="entry name" value="COV_NSP1"/>
    <property type="match status" value="1"/>
</dbReference>
<dbReference type="PROSITE" id="PS51991">
    <property type="entry name" value="COV_NSP2_C"/>
    <property type="match status" value="1"/>
</dbReference>
<dbReference type="PROSITE" id="PS51990">
    <property type="entry name" value="COV_NSP2_M"/>
    <property type="match status" value="1"/>
</dbReference>
<dbReference type="PROSITE" id="PS51989">
    <property type="entry name" value="COV_NSP2_N"/>
    <property type="match status" value="1"/>
</dbReference>
<dbReference type="PROSITE" id="PS51992">
    <property type="entry name" value="COV_NSP3_Y"/>
    <property type="match status" value="1"/>
</dbReference>
<dbReference type="PROSITE" id="PS51943">
    <property type="entry name" value="COV_NSP3A_UBL"/>
    <property type="match status" value="1"/>
</dbReference>
<dbReference type="PROSITE" id="PS51944">
    <property type="entry name" value="COV_NSP3D_UBL"/>
    <property type="match status" value="1"/>
</dbReference>
<dbReference type="PROSITE" id="PS51946">
    <property type="entry name" value="COV_NSP4C"/>
    <property type="match status" value="1"/>
</dbReference>
<dbReference type="PROSITE" id="PS51949">
    <property type="entry name" value="COV_NSP7"/>
    <property type="match status" value="1"/>
</dbReference>
<dbReference type="PROSITE" id="PS51950">
    <property type="entry name" value="COV_NSP8"/>
    <property type="match status" value="1"/>
</dbReference>
<dbReference type="PROSITE" id="PS51951">
    <property type="entry name" value="COV_NSP9_SSRNA_BD"/>
    <property type="match status" value="1"/>
</dbReference>
<dbReference type="PROSITE" id="PS51442">
    <property type="entry name" value="M_PRO"/>
    <property type="match status" value="1"/>
</dbReference>
<dbReference type="PROSITE" id="PS51154">
    <property type="entry name" value="MACRO"/>
    <property type="match status" value="1"/>
</dbReference>
<dbReference type="PROSITE" id="PS51124">
    <property type="entry name" value="PEPTIDASE_C16"/>
    <property type="match status" value="2"/>
</dbReference>
<feature type="chain" id="PRO_0000338302" description="Replicase polyprotein 1a">
    <location>
        <begin position="1"/>
        <end position="4017"/>
    </location>
</feature>
<feature type="chain" id="PRO_0000338303" description="Non-structural protein 1" evidence="1">
    <location>
        <begin position="1"/>
        <end position="110"/>
    </location>
</feature>
<feature type="chain" id="PRO_0000338304" description="Non-structural protein 2" evidence="1">
    <location>
        <begin position="111"/>
        <end position="879"/>
    </location>
</feature>
<feature type="chain" id="PRO_0000338305" description="Non-structural protein 3" evidence="1">
    <location>
        <begin position="880"/>
        <end position="2388"/>
    </location>
</feature>
<feature type="chain" id="PRO_0000338306" description="Non-structural protein 4" evidence="1">
    <location>
        <begin position="2389"/>
        <end position="2878"/>
    </location>
</feature>
<feature type="chain" id="PRO_0000338307" description="3C-like proteinase">
    <location>
        <begin position="2879"/>
        <end position="3180"/>
    </location>
</feature>
<feature type="chain" id="PRO_0000338308" description="Non-structural protein 6" evidence="1">
    <location>
        <begin position="3181"/>
        <end position="3474"/>
    </location>
</feature>
<feature type="chain" id="PRO_0000338309" description="Non-structural protein 7" evidence="1">
    <location>
        <begin position="3475"/>
        <end position="3557"/>
    </location>
</feature>
<feature type="chain" id="PRO_0000338310" description="Non-structural protein 8" evidence="1">
    <location>
        <begin position="3558"/>
        <end position="3752"/>
    </location>
</feature>
<feature type="chain" id="PRO_0000338311" description="Non-structural protein 9">
    <location>
        <begin position="3753"/>
        <end position="3863"/>
    </location>
</feature>
<feature type="chain" id="PRO_0000338312" description="Non-structural protein 10" evidence="1">
    <location>
        <begin position="3864"/>
        <end position="3998"/>
    </location>
</feature>
<feature type="chain" id="PRO_0000338313" description="Non-structural protein 11" evidence="2">
    <location>
        <begin position="3999"/>
        <end position="4017"/>
    </location>
</feature>
<feature type="transmembrane region" description="Helical" evidence="2">
    <location>
        <begin position="1896"/>
        <end position="1916"/>
    </location>
</feature>
<feature type="transmembrane region" description="Helical" evidence="2">
    <location>
        <begin position="1995"/>
        <end position="2015"/>
    </location>
</feature>
<feature type="transmembrane region" description="Helical" evidence="2">
    <location>
        <begin position="2033"/>
        <end position="2053"/>
    </location>
</feature>
<feature type="transmembrane region" description="Helical" evidence="2">
    <location>
        <begin position="2401"/>
        <end position="2421"/>
    </location>
</feature>
<feature type="transmembrane region" description="Helical" evidence="2">
    <location>
        <begin position="2467"/>
        <end position="2487"/>
    </location>
</feature>
<feature type="transmembrane region" description="Helical" evidence="2">
    <location>
        <begin position="2497"/>
        <end position="2517"/>
    </location>
</feature>
<feature type="transmembrane region" description="Helical" evidence="2">
    <location>
        <begin position="2538"/>
        <end position="2558"/>
    </location>
</feature>
<feature type="transmembrane region" description="Helical" evidence="2">
    <location>
        <begin position="2666"/>
        <end position="2686"/>
    </location>
</feature>
<feature type="transmembrane region" description="Helical" evidence="2">
    <location>
        <begin position="2695"/>
        <end position="2715"/>
    </location>
</feature>
<feature type="transmembrane region" description="Helical" evidence="2">
    <location>
        <begin position="2721"/>
        <end position="2741"/>
    </location>
</feature>
<feature type="transmembrane region" description="Helical" evidence="2">
    <location>
        <begin position="2746"/>
        <end position="2766"/>
    </location>
</feature>
<feature type="transmembrane region" description="Helical" evidence="2">
    <location>
        <begin position="3187"/>
        <end position="3207"/>
    </location>
</feature>
<feature type="transmembrane region" description="Helical" evidence="2">
    <location>
        <begin position="3217"/>
        <end position="3237"/>
    </location>
</feature>
<feature type="transmembrane region" description="Helical" evidence="2">
    <location>
        <begin position="3242"/>
        <end position="3262"/>
    </location>
</feature>
<feature type="transmembrane region" description="Helical" evidence="2">
    <location>
        <begin position="3280"/>
        <end position="3300"/>
    </location>
</feature>
<feature type="transmembrane region" description="Helical" evidence="2">
    <location>
        <begin position="3313"/>
        <end position="3333"/>
    </location>
</feature>
<feature type="transmembrane region" description="Helical" evidence="2">
    <location>
        <begin position="3347"/>
        <end position="3367"/>
    </location>
</feature>
<feature type="transmembrane region" description="Helical" evidence="2">
    <location>
        <begin position="3371"/>
        <end position="3391"/>
    </location>
</feature>
<feature type="transmembrane region" description="Helical" evidence="2">
    <location>
        <begin position="3394"/>
        <end position="3414"/>
    </location>
</feature>
<feature type="domain" description="CoV Nsp1 globular" evidence="12">
    <location>
        <begin position="2"/>
        <end position="108"/>
    </location>
</feature>
<feature type="domain" description="CoV Nsp2 N-terminal" evidence="13">
    <location>
        <begin position="111"/>
        <end position="349"/>
    </location>
</feature>
<feature type="domain" description="CoV Nsp2 middle" evidence="14">
    <location>
        <begin position="378"/>
        <end position="773"/>
    </location>
</feature>
<feature type="domain" description="CoV Nsp2 C-terminal" evidence="15">
    <location>
        <begin position="768"/>
        <end position="879"/>
    </location>
</feature>
<feature type="domain" description="Ubiquitin-like 1" evidence="3">
    <location>
        <begin position="882"/>
        <end position="983"/>
    </location>
</feature>
<feature type="domain" description="Peptidase C16 1" evidence="4">
    <location>
        <begin position="1055"/>
        <end position="1299"/>
    </location>
</feature>
<feature type="domain" description="Macro" evidence="5">
    <location>
        <begin position="1318"/>
        <end position="1489"/>
    </location>
</feature>
<feature type="domain" description="Ubiquitin-like 2" evidence="3">
    <location>
        <begin position="1486"/>
        <end position="1542"/>
    </location>
</feature>
<feature type="domain" description="Peptidase C16 2" evidence="4">
    <location>
        <begin position="1550"/>
        <end position="1803"/>
    </location>
</feature>
<feature type="domain" description="3Ecto" evidence="17">
    <location>
        <begin position="1905"/>
        <end position="1970"/>
    </location>
</feature>
<feature type="domain" description="CoV Nsp3 Y" evidence="16">
    <location>
        <begin position="2044"/>
        <end position="2384"/>
    </location>
</feature>
<feature type="domain" description="Nsp4C" evidence="7">
    <location>
        <begin position="2783"/>
        <end position="2878"/>
    </location>
</feature>
<feature type="domain" description="Peptidase C30" evidence="6">
    <location>
        <begin position="2879"/>
        <end position="3180"/>
    </location>
</feature>
<feature type="domain" description="RdRp Nsp7 cofactor" evidence="8">
    <location>
        <begin position="3475"/>
        <end position="3557"/>
    </location>
</feature>
<feature type="domain" description="RdRp Nsp8 cofactor" evidence="9">
    <location>
        <begin position="3558"/>
        <end position="3752"/>
    </location>
</feature>
<feature type="domain" description="Nsp9 ssRNA-binding" evidence="10">
    <location>
        <begin position="3753"/>
        <end position="3863"/>
    </location>
</feature>
<feature type="domain" description="ExoN/MTase coactivator" evidence="11">
    <location>
        <begin position="3864"/>
        <end position="4004"/>
    </location>
</feature>
<feature type="zinc finger region" description="C4-type 1; degenerate" evidence="4">
    <location>
        <begin position="1164"/>
        <end position="1195"/>
    </location>
</feature>
<feature type="zinc finger region" description="C4-type 2; atypical" evidence="4">
    <location>
        <begin position="1667"/>
        <end position="1696"/>
    </location>
</feature>
<feature type="zinc finger region" evidence="1">
    <location>
        <begin position="3937"/>
        <end position="3953"/>
    </location>
</feature>
<feature type="zinc finger region" evidence="1">
    <location>
        <begin position="3979"/>
        <end position="3992"/>
    </location>
</feature>
<feature type="region of interest" description="C4" evidence="13">
    <location>
        <begin position="240"/>
        <end position="260"/>
    </location>
</feature>
<feature type="region of interest" description="Disordered" evidence="18">
    <location>
        <begin position="989"/>
        <end position="1032"/>
    </location>
</feature>
<feature type="region of interest" description="HD1">
    <location>
        <begin position="1896"/>
        <end position="2053"/>
    </location>
</feature>
<feature type="region of interest" description="Y1" evidence="16">
    <location>
        <begin position="2044"/>
        <end position="2134"/>
    </location>
</feature>
<feature type="region of interest" description="ZF1" evidence="16">
    <location>
        <begin position="2048"/>
        <end position="2061"/>
    </location>
</feature>
<feature type="region of interest" description="ZF2" evidence="16">
    <location>
        <begin position="2094"/>
        <end position="2104"/>
    </location>
</feature>
<feature type="region of interest" description="CoV-Y" evidence="16">
    <location>
        <begin position="2135"/>
        <end position="2384"/>
    </location>
</feature>
<feature type="region of interest" description="Y2" evidence="16">
    <location>
        <begin position="2135"/>
        <end position="2224"/>
    </location>
</feature>
<feature type="region of interest" description="Y3" evidence="16">
    <location>
        <begin position="2225"/>
        <end position="2281"/>
    </location>
</feature>
<feature type="region of interest" description="Y4" evidence="16">
    <location>
        <begin position="2282"/>
        <end position="2384"/>
    </location>
</feature>
<feature type="region of interest" description="HD2">
    <location>
        <begin position="2401"/>
        <end position="2766"/>
    </location>
</feature>
<feature type="region of interest" description="HD3">
    <location>
        <begin position="3187"/>
        <end position="3414"/>
    </location>
</feature>
<feature type="compositionally biased region" description="Acidic residues" evidence="18">
    <location>
        <begin position="997"/>
        <end position="1015"/>
    </location>
</feature>
<feature type="active site" description="For PL1-PRO activity" evidence="4">
    <location>
        <position position="1093"/>
    </location>
</feature>
<feature type="active site" description="For PL1-PRO activity" evidence="4">
    <location>
        <position position="1244"/>
    </location>
</feature>
<feature type="active site" description="For PL1-PRO activity" evidence="4">
    <location>
        <position position="1257"/>
    </location>
</feature>
<feature type="active site" description="For PL2-PRO activity" evidence="4">
    <location>
        <position position="1588"/>
    </location>
</feature>
<feature type="active site" description="For PL2-PRO activity" evidence="4">
    <location>
        <position position="1741"/>
    </location>
</feature>
<feature type="active site" description="For PL2-PRO activity" evidence="4">
    <location>
        <position position="1754"/>
    </location>
</feature>
<feature type="active site" description="For 3CL-PRO activity" evidence="6">
    <location>
        <position position="2919"/>
    </location>
</feature>
<feature type="active site" description="For 3CL-PRO activity" evidence="6">
    <location>
        <position position="3022"/>
    </location>
</feature>
<feature type="binding site" evidence="13">
    <location>
        <position position="240"/>
    </location>
    <ligand>
        <name>Zn(2+)</name>
        <dbReference type="ChEBI" id="CHEBI:29105"/>
        <label>1</label>
    </ligand>
</feature>
<feature type="binding site" evidence="13">
    <location>
        <position position="242"/>
    </location>
    <ligand>
        <name>Zn(2+)</name>
        <dbReference type="ChEBI" id="CHEBI:29105"/>
        <label>1</label>
    </ligand>
</feature>
<feature type="binding site" evidence="13">
    <location>
        <position position="259"/>
    </location>
    <ligand>
        <name>Zn(2+)</name>
        <dbReference type="ChEBI" id="CHEBI:29105"/>
        <label>1</label>
    </ligand>
</feature>
<feature type="binding site" evidence="13">
    <location>
        <position position="260"/>
    </location>
    <ligand>
        <name>Zn(2+)</name>
        <dbReference type="ChEBI" id="CHEBI:29105"/>
        <label>1</label>
    </ligand>
</feature>
<feature type="binding site" evidence="4">
    <location>
        <position position="1667"/>
    </location>
    <ligand>
        <name>Zn(2+)</name>
        <dbReference type="ChEBI" id="CHEBI:29105"/>
        <label>2</label>
    </ligand>
</feature>
<feature type="binding site" evidence="4">
    <location>
        <position position="1670"/>
    </location>
    <ligand>
        <name>Zn(2+)</name>
        <dbReference type="ChEBI" id="CHEBI:29105"/>
        <label>2</label>
    </ligand>
</feature>
<feature type="binding site" evidence="4">
    <location>
        <position position="1694"/>
    </location>
    <ligand>
        <name>Zn(2+)</name>
        <dbReference type="ChEBI" id="CHEBI:29105"/>
        <label>2</label>
    </ligand>
</feature>
<feature type="binding site" evidence="4">
    <location>
        <position position="1696"/>
    </location>
    <ligand>
        <name>Zn(2+)</name>
        <dbReference type="ChEBI" id="CHEBI:29105"/>
        <label>2</label>
    </ligand>
</feature>
<feature type="binding site" evidence="16">
    <location>
        <position position="2048"/>
    </location>
    <ligand>
        <name>Zn(2+)</name>
        <dbReference type="ChEBI" id="CHEBI:29105"/>
        <label>3</label>
    </ligand>
</feature>
<feature type="binding site" evidence="16">
    <location>
        <position position="2053"/>
    </location>
    <ligand>
        <name>Zn(2+)</name>
        <dbReference type="ChEBI" id="CHEBI:29105"/>
        <label>3</label>
    </ligand>
</feature>
<feature type="binding site" evidence="16">
    <location>
        <position position="2058"/>
    </location>
    <ligand>
        <name>Zn(2+)</name>
        <dbReference type="ChEBI" id="CHEBI:29105"/>
        <label>3</label>
    </ligand>
</feature>
<feature type="binding site" evidence="16">
    <location>
        <position position="2061"/>
    </location>
    <ligand>
        <name>Zn(2+)</name>
        <dbReference type="ChEBI" id="CHEBI:29105"/>
        <label>3</label>
    </ligand>
</feature>
<feature type="binding site" evidence="16">
    <location>
        <position position="2094"/>
    </location>
    <ligand>
        <name>Zn(2+)</name>
        <dbReference type="ChEBI" id="CHEBI:29105"/>
        <label>4</label>
    </ligand>
</feature>
<feature type="binding site" evidence="16">
    <location>
        <position position="2097"/>
    </location>
    <ligand>
        <name>Zn(2+)</name>
        <dbReference type="ChEBI" id="CHEBI:29105"/>
        <label>4</label>
    </ligand>
</feature>
<feature type="binding site" evidence="16">
    <location>
        <position position="2101"/>
    </location>
    <ligand>
        <name>Zn(2+)</name>
        <dbReference type="ChEBI" id="CHEBI:29105"/>
        <label>4</label>
    </ligand>
</feature>
<feature type="binding site" evidence="16">
    <location>
        <position position="2104"/>
    </location>
    <ligand>
        <name>Zn(2+)</name>
        <dbReference type="ChEBI" id="CHEBI:29105"/>
        <label>4</label>
    </ligand>
</feature>
<feature type="binding site" evidence="11">
    <location>
        <position position="3937"/>
    </location>
    <ligand>
        <name>Zn(2+)</name>
        <dbReference type="ChEBI" id="CHEBI:29105"/>
        <label>5</label>
    </ligand>
</feature>
<feature type="binding site" evidence="11">
    <location>
        <position position="3940"/>
    </location>
    <ligand>
        <name>Zn(2+)</name>
        <dbReference type="ChEBI" id="CHEBI:29105"/>
        <label>5</label>
    </ligand>
</feature>
<feature type="binding site" evidence="11">
    <location>
        <position position="3946"/>
    </location>
    <ligand>
        <name>Zn(2+)</name>
        <dbReference type="ChEBI" id="CHEBI:29105"/>
        <label>5</label>
    </ligand>
</feature>
<feature type="binding site" evidence="11">
    <location>
        <position position="3953"/>
    </location>
    <ligand>
        <name>Zn(2+)</name>
        <dbReference type="ChEBI" id="CHEBI:29105"/>
        <label>5</label>
    </ligand>
</feature>
<feature type="binding site" evidence="11">
    <location>
        <position position="3979"/>
    </location>
    <ligand>
        <name>Zn(2+)</name>
        <dbReference type="ChEBI" id="CHEBI:29105"/>
        <label>6</label>
    </ligand>
</feature>
<feature type="binding site" evidence="11">
    <location>
        <position position="3982"/>
    </location>
    <ligand>
        <name>Zn(2+)</name>
        <dbReference type="ChEBI" id="CHEBI:29105"/>
        <label>6</label>
    </ligand>
</feature>
<feature type="binding site" evidence="11">
    <location>
        <position position="3990"/>
    </location>
    <ligand>
        <name>Zn(2+)</name>
        <dbReference type="ChEBI" id="CHEBI:29105"/>
        <label>6</label>
    </ligand>
</feature>
<feature type="binding site" evidence="11">
    <location>
        <position position="3992"/>
    </location>
    <ligand>
        <name>Zn(2+)</name>
        <dbReference type="ChEBI" id="CHEBI:29105"/>
        <label>6</label>
    </ligand>
</feature>
<feature type="site" description="Cleavage; by PL1-PRO" evidence="1">
    <location>
        <begin position="110"/>
        <end position="111"/>
    </location>
</feature>
<feature type="site" description="Cleavage; by PL1-PRO" evidence="1">
    <location>
        <begin position="879"/>
        <end position="880"/>
    </location>
</feature>
<feature type="site" description="Cleavage; by PL2-PRO" evidence="1">
    <location>
        <begin position="2388"/>
        <end position="2389"/>
    </location>
</feature>
<feature type="site" description="Cleavage; by 3CL-PRO" evidence="1">
    <location>
        <begin position="2878"/>
        <end position="2879"/>
    </location>
</feature>
<feature type="site" description="Cleavage; by 3CL-PRO" evidence="1">
    <location>
        <begin position="3180"/>
        <end position="3181"/>
    </location>
</feature>
<feature type="site" description="Cleavage; by 3CL-PRO" evidence="1">
    <location>
        <begin position="3474"/>
        <end position="3475"/>
    </location>
</feature>
<feature type="site" description="Cleavage; by 3CL-PRO" evidence="1">
    <location>
        <begin position="3557"/>
        <end position="3558"/>
    </location>
</feature>
<feature type="site" description="Cleavage; by 3CL-PRO" evidence="1">
    <location>
        <begin position="3752"/>
        <end position="3753"/>
    </location>
</feature>
<feature type="site" description="Cleavage; by 3CL-PRO" evidence="1">
    <location>
        <begin position="3863"/>
        <end position="3864"/>
    </location>
</feature>
<feature type="site" description="Cleavage; by 3CL-PRO" evidence="1">
    <location>
        <begin position="3998"/>
        <end position="3999"/>
    </location>
</feature>
<feature type="disulfide bond" evidence="17">
    <location>
        <begin position="1921"/>
        <end position="1948"/>
    </location>
</feature>
<feature type="disulfide bond" evidence="17">
    <location>
        <begin position="1939"/>
        <end position="1945"/>
    </location>
</feature>
<feature type="sequence variant" description="In strain: Isolate Purdue-115.">
    <original>F</original>
    <variation>S</variation>
    <location>
        <position position="572"/>
    </location>
</feature>
<feature type="sequence variant" description="In strain: Isolate Purdue-115.">
    <original>E</original>
    <variation>D</variation>
    <location>
        <position position="1041"/>
    </location>
</feature>
<feature type="sequence variant" description="In strain: Isolate Purdue-115.">
    <original>P</original>
    <variation>T</variation>
    <location>
        <position position="2375"/>
    </location>
</feature>
<feature type="sequence variant" description="In strain: Isolate Purdue-115.">
    <original>E</original>
    <variation>Q</variation>
    <location>
        <position position="2381"/>
    </location>
</feature>
<feature type="strand" evidence="22">
    <location>
        <begin position="4"/>
        <end position="10"/>
    </location>
</feature>
<feature type="helix" evidence="22">
    <location>
        <begin position="23"/>
        <end position="36"/>
    </location>
</feature>
<feature type="strand" evidence="22">
    <location>
        <begin position="41"/>
        <end position="45"/>
    </location>
</feature>
<feature type="helix" evidence="22">
    <location>
        <begin position="46"/>
        <end position="51"/>
    </location>
</feature>
<feature type="strand" evidence="22">
    <location>
        <begin position="59"/>
        <end position="75"/>
    </location>
</feature>
<feature type="strand" evidence="22">
    <location>
        <begin position="84"/>
        <end position="90"/>
    </location>
</feature>
<feature type="strand" evidence="22">
    <location>
        <begin position="96"/>
        <end position="104"/>
    </location>
</feature>
<feature type="strand" evidence="21">
    <location>
        <begin position="1077"/>
        <end position="1080"/>
    </location>
</feature>
<feature type="strand" evidence="21">
    <location>
        <begin position="1083"/>
        <end position="1086"/>
    </location>
</feature>
<feature type="helix" evidence="21">
    <location>
        <begin position="1093"/>
        <end position="1102"/>
    </location>
</feature>
<feature type="helix" evidence="21">
    <location>
        <begin position="1111"/>
        <end position="1116"/>
    </location>
</feature>
<feature type="turn" evidence="21">
    <location>
        <begin position="1117"/>
        <end position="1119"/>
    </location>
</feature>
<feature type="helix" evidence="21">
    <location>
        <begin position="1122"/>
        <end position="1132"/>
    </location>
</feature>
<feature type="helix" evidence="21">
    <location>
        <begin position="1142"/>
        <end position="1150"/>
    </location>
</feature>
<feature type="strand" evidence="21">
    <location>
        <begin position="1156"/>
        <end position="1164"/>
    </location>
</feature>
<feature type="strand" evidence="21">
    <location>
        <begin position="1167"/>
        <end position="1180"/>
    </location>
</feature>
<feature type="strand" evidence="21">
    <location>
        <begin position="1183"/>
        <end position="1185"/>
    </location>
</feature>
<feature type="strand" evidence="21">
    <location>
        <begin position="1187"/>
        <end position="1191"/>
    </location>
</feature>
<feature type="turn" evidence="21">
    <location>
        <begin position="1193"/>
        <end position="1195"/>
    </location>
</feature>
<feature type="strand" evidence="21">
    <location>
        <begin position="1198"/>
        <end position="1217"/>
    </location>
</feature>
<feature type="helix" evidence="21">
    <location>
        <begin position="1223"/>
        <end position="1225"/>
    </location>
</feature>
<feature type="strand" evidence="21">
    <location>
        <begin position="1226"/>
        <end position="1228"/>
    </location>
</feature>
<feature type="strand" evidence="21">
    <location>
        <begin position="1231"/>
        <end position="1238"/>
    </location>
</feature>
<feature type="turn" evidence="21">
    <location>
        <begin position="1240"/>
        <end position="1242"/>
    </location>
</feature>
<feature type="strand" evidence="21">
    <location>
        <begin position="1244"/>
        <end position="1249"/>
    </location>
</feature>
<feature type="turn" evidence="21">
    <location>
        <begin position="1250"/>
        <end position="1253"/>
    </location>
</feature>
<feature type="strand" evidence="21">
    <location>
        <begin position="1254"/>
        <end position="1257"/>
    </location>
</feature>
<feature type="strand" evidence="21">
    <location>
        <begin position="1260"/>
        <end position="1262"/>
    </location>
</feature>
<feature type="strand" evidence="21">
    <location>
        <begin position="1269"/>
        <end position="1280"/>
    </location>
</feature>
<feature type="turn" evidence="23">
    <location>
        <begin position="2889"/>
        <end position="2891"/>
    </location>
</feature>
<feature type="helix" evidence="23">
    <location>
        <begin position="2892"/>
        <end position="2894"/>
    </location>
</feature>
<feature type="strand" evidence="23">
    <location>
        <begin position="2895"/>
        <end position="2900"/>
    </location>
</feature>
<feature type="strand" evidence="23">
    <location>
        <begin position="2903"/>
        <end position="2910"/>
    </location>
</feature>
<feature type="strand" evidence="23">
    <location>
        <begin position="2913"/>
        <end position="2917"/>
    </location>
</feature>
<feature type="helix" evidence="23">
    <location>
        <begin position="2918"/>
        <end position="2921"/>
    </location>
</feature>
<feature type="helix" evidence="23">
    <location>
        <begin position="2931"/>
        <end position="2936"/>
    </location>
</feature>
<feature type="helix" evidence="23">
    <location>
        <begin position="2940"/>
        <end position="2942"/>
    </location>
</feature>
<feature type="strand" evidence="23">
    <location>
        <begin position="2943"/>
        <end position="2948"/>
    </location>
</feature>
<feature type="strand" evidence="23">
    <location>
        <begin position="2950"/>
        <end position="2952"/>
    </location>
</feature>
<feature type="strand" evidence="23">
    <location>
        <begin position="2954"/>
        <end position="2960"/>
    </location>
</feature>
<feature type="strand" evidence="23">
    <location>
        <begin position="2963"/>
        <end position="2970"/>
    </location>
</feature>
<feature type="strand" evidence="23">
    <location>
        <begin position="2988"/>
        <end position="2995"/>
    </location>
</feature>
<feature type="strand" evidence="23">
    <location>
        <begin position="2998"/>
        <end position="3006"/>
    </location>
</feature>
<feature type="strand" evidence="23">
    <location>
        <begin position="3025"/>
        <end position="3030"/>
    </location>
</feature>
<feature type="strand" evidence="23">
    <location>
        <begin position="3033"/>
        <end position="3043"/>
    </location>
</feature>
<feature type="strand" evidence="23">
    <location>
        <begin position="3049"/>
        <end position="3052"/>
    </location>
</feature>
<feature type="helix" evidence="23">
    <location>
        <begin position="3059"/>
        <end position="3061"/>
    </location>
</feature>
<feature type="helix" evidence="23">
    <location>
        <begin position="3078"/>
        <end position="3090"/>
    </location>
</feature>
<feature type="helix" evidence="23">
    <location>
        <begin position="3104"/>
        <end position="3111"/>
    </location>
</feature>
<feature type="turn" evidence="23">
    <location>
        <begin position="3112"/>
        <end position="3115"/>
    </location>
</feature>
<feature type="helix" evidence="23">
    <location>
        <begin position="3123"/>
        <end position="3125"/>
    </location>
</feature>
<feature type="helix" evidence="23">
    <location>
        <begin position="3126"/>
        <end position="3132"/>
    </location>
</feature>
<feature type="helix" evidence="23">
    <location>
        <begin position="3136"/>
        <end position="3146"/>
    </location>
</feature>
<feature type="strand" evidence="23">
    <location>
        <begin position="3158"/>
        <end position="3160"/>
    </location>
</feature>
<feature type="helix" evidence="23">
    <location>
        <begin position="3167"/>
        <end position="3175"/>
    </location>
</feature>
<organismHost>
    <name type="scientific">Sus scrofa</name>
    <name type="common">Pig</name>
    <dbReference type="NCBI Taxonomy" id="9823"/>
</organismHost>
<organism>
    <name type="scientific">Porcine transmissible gastroenteritis coronavirus (strain Purdue)</name>
    <name type="common">TGEV</name>
    <dbReference type="NCBI Taxonomy" id="11151"/>
    <lineage>
        <taxon>Viruses</taxon>
        <taxon>Riboviria</taxon>
        <taxon>Orthornavirae</taxon>
        <taxon>Pisuviricota</taxon>
        <taxon>Pisoniviricetes</taxon>
        <taxon>Nidovirales</taxon>
        <taxon>Cornidovirineae</taxon>
        <taxon>Coronaviridae</taxon>
        <taxon>Orthocoronavirinae</taxon>
        <taxon>Alphacoronavirus</taxon>
        <taxon>Tegacovirus</taxon>
        <taxon>Alphacoronavirus 1</taxon>
    </lineage>
</organism>
<sequence>MSSKQFKILVNEDYQVNVPSLPIRDVLQEIKYCYRNGFEGYVFVPEYCRDLVDCDRKDHYVIGVLGNGVSDLKPVLLTEPSVMLQGFIVRANCNGVLEDFDLKIARTGRGAIYVDQYMCGADGKPVIEGDFKDYFGDEDIIEFEGEEYHCAWTTVRDEKPLNQQTLFTIQEIQYNLDIPHKLPNCATRHVAPPVKKNSKIVLSEDYKKLYDIFGSPFMGNGDCLSKCFDTLHFIAATLRCPCGSESSGVGDWTGFKTACCGLSGKVKGVTLGDIKPGDAVVTSMSAGKGVKFFANCVLQYAGDVEGVSIWKVIKTFTVDETVCTPGFEGELNDFIKPESKSLVACSVKRAFITGDIDDAVHDCIITGKLDLSTNLFGNVGLLFKKTPWFVQKCGALFVDAWKVVEELCGSLTLTYKQIYEVVASLCTSAFTIVNYKPTFVVPDNRVKDLVDKCVKVLVKAFDVFTQIITIAGIEAKCFVLGAKYLLFNNALVKLVSVKILGKKQKGLECAFFATSLVGATVNVTPKRTETATISLNKVDDVVAPGEGYIVIVGDMAFYKSGEYYFMMSSPNFVLTNNVFKAVKVPSYDIVYDVDNDTKSKMIAKLGSSFEYDGDIDAAIVKVNELLIEFRQQSLCFRAFKDDKSIFVEAYFKKYKMPACLAKHIGLWNIIKKDSCKRGFLNLFNHLNELEDIKETNIQAIKNILCPDPLLDLDYGAIWYNCMPGCSDPSVLGSVQLLIGNGVKVVCDGCKGFANQLSKGYNKLCNAARNDIEIGGIPFSTFKTPTNTFIEMTDAIYSVIEQGKALSFRDADVPVVDNGTISTADWSEPILLEPAEYVKPKNNGNVIVIAGYTFYKDEDEHFYPYGFGKIVQRMYNKMGGGDKTVSFSEEVDVQEIAPVTRVKLEFEFDNEIVTGVLERAIGTRYKFTGTTWEEFEESISEELDAIFDTLANQGVELEGYFIYDTCGGFDIKNPDGIMISQYDINITADEKSEVSASSEEEEVESVEEDPENEIVEASEGAEGTSSQEEVETVEVADITSTEEDVDIVEVSAKDDPWAAAVDVQEAEQFNPSLPPFKTTNLNGKIILKQGDNNCWINACCYQLQAFDFFNNEAWEKFKKGDVMDFVNLCYAATTLARGHSGDAEYLLELMLNDYSTAKIVLAAKCGCGEKEIVLERAVFKLTPLKESFNYGVCGDCMQVNTCRFLSVEGSGVFVHDILSKQTPEAMFVVKPVMHAVYTGTTQNGHYMVDDIEHGYCVDGMGIKPLKKRCYTSTLFINANVMTRAEKPKQEFKVEKVEQQPIVEENKSSIEKEEIQSPKNDDLILPFYKAGKLSFYQGALDVLINFLEPDVIVNAANGDLKHMGGVARAIDVFTGGKLTERSKDYLKKNKSIAPGNAVFFENVIEHLSVLNAVGPRNGDSRVEAKLCNVYKAIAKCEGKILTPLISVGIFNVRLETSLQCLLKTVNDRGLNVFVYTDQERQTIENFFSCSIPVNVTEDNVNHERVSVSFDKTYGEQLKGTVVIKDKDVTNQLPSAFDVGQKVIKAIDIDWQAHYGFRDAAAFSASSHDAYKFEVVTHSNFIVHKQTDNNCWINAICLALQRLKPQWKFPGVRGLWNEFLERKTQGFVHMLYHISGVKKGEPGDAELMLHKLGDLMDNDCEIIVTHTTACDKCAKVEKFVGPVVAAPLAIHGTDETCVHGVSVNVKVTQIKGTVAITSLIGPIIGEVLEATGYICYSGSNRNGHYTYYDNRNGLVVDAEKAYHFNRDLLQVTTAIASNFVVKKPQAEERPKNCAFNKVAASPKIVQEQKLLAIESGANYALTEFGRYADMFFMAGDKILRLLLEVFKYLLVLFMCLRSTKMPKVKVKPPLAFKDFGAKVRTLNYMRQLNKPSVWRYAKLVLLLIAIYNFFYLFVSIPVVHKLTCNGAVQAYKNSSFIKSAVCGNSILCKACLASYDELADFQHLQVTWDFKSDPLWNRLVQLSYFAFLAVFGNNYVRCFLMYFVSQYLNLWLSYFGYVEYSWFLHVVNFESISAEFVIVVIVVKAVLALKHIVFACSNPSCKTCSRTARQTRIPIQVVVNGSMKTVYVHANGTGKFCKKHNFYCKNCDSYGFENTFICDEIVRDLSNSVKQTVYATDRSHQEVTKVECSDGFYRFYVGDEFTSYDYDVKHKKYSSQEVLKSMLLLDDFIVYSPSGSALANVRNACVYFSQLIGKPIKIVNSDLLEDLSVDFKGALFNAKKNVIKNSFNVDVSECKNLDECYRACNLNVSFSTFEMAVNNAHRFGILITDRSFNNFWPSKVKPGSSGVSAMDIGKCMTSDAKIVNAKVLTQRGKSVVWLSQDFAALSSTAQKVLVKTFVEEGVNFSLTFNAVGSDDDLPYERFTESVSPKSGSGFFDVITQLKQIVILVFVFIFICGLCSVYSVATQSYIESAEGYDYMVIKNGIVQPFDDTISCVHNTYKGFGDWFKAKYGFIPTFGKSCPIVVGTVFDLENMRPIPDVPAYVSIVGRSLVFAINAAFGVTNMCYDHTGNAVSKDSYFDTCVFNTACTTLTGLGGTIVYCAKQGLVEGAKLYSDLMPDYYYEHASGNMVKLPAIIRGLGLRFVKTQATTYCRVGECIDSKAGFCFGGDNWFVYDNEFGNGYICGNSVLGFFKNVFKLFNSNMSVVATSGAMLVNIIIACLAIAMCYGVLKFKKIFGDCTFLIVMIIVTLVVNNVSYFVTQNTFFMIIYAIVYYFITRKLAYPGILDAGFIIAYINMAPWYVITAYILVFLYDSLPSLFKLKVSTNLFEGDKFVGNFESAAMGTFVIDMRSYETIVNSTSIARIKSYANSFNKYKYYTGSMGEADYRMACYAHLGKALMDYSVNRTDMLYTPPTVSVNSTLQSGLRKMAQPSGLVEPCIVRVSYGNNVLNGLWLGDEVICPRHVIASDTTRVINYENEMSSVRLHNFSVSKNNVFLGVVSARYKGVNLVLKVNQVNPNTPEHKFKSIKAGESFNILACYEGCPGSVYGVNMRSQGTIKGSFIAGTCGSVGYVLENGILYFVYMHHLELGNGSHVGSNFEGEMYGGYEDQPSMQLEGTNVMSSDNVVAFLYAALINGERWFVTNTSMSLESYNTWAKTNSFTELSSTDAFSMLAAKTGQSVEKLLDSIVRLNKGFGGRTILSYGSLCDEFTPTEVIRQMYGVNLQAGKVKSFFYPIMTAMTILFAFWLEFFMYTPFTWINPTFVSIVLAVTTLISTVFVSGIKHKMLFFMSFVLPSVILVTAHNLFWDFSYYESLQSIVENTNTMFLPVDMQGVMLTVFCFIVFVTYSVRFFTCKQSWFSLAVTTILVIFNMVKIFGTSDEPWTENQIAFCFVNMLTMIVSLTTKDWMVVIASYRIAYYIVVCVMPSAFVSDFGFMKCISIVYMACGYLFCCYYGILYWVNRFTCMTCGVYQFTVSAAELKYMTANNLSAPKNAYDAMILSAKLIGVGGKRNIKISTVQSKLTEMKCTNVVLLGLLSKMHVESNSKEWNYCVGLHNEINLCDDPEIVLEKLLALIAFFLSKHNTCDLSELIESYFENTTILQSVASAYAALPSWIALEKARADLEEAKKNDVSPQILKQLTKAFNIAKSDFEREASVQKKLDKMAEQAAASMYKEARAVDRKSKIVSAMHSLLFGMLKKLDMSSVNTIIDQARNGVLPLSIIPAASATRLVVITPSLEVFSKIRQENNVHYAGAIWTIVEVKDANGSHVHLKEVTAANELNLTWPLSITCERTTKLQNNEIMPGKLKERAVRASATLDGEAFGSGKALMASESGKSFMYAFIASDNNLKYVKWESNNDIIPIELEAPLRFYVDGANGPEVKYLYFVKNLNTLRRGAVLGYIGATVRLQAGKPTEHPSNSSLLTLCAFSPDPAKAYVDAVKRGMQPVNNCVKMLSNGAGNGMAVTNGVEANTQQDSYGGASVCIYCRCHVEHPAIDGLCRYKGKFVQIPTGTQDPIRFCIENEVCVVCGCWLNNGCMCDRTSMQSFTVDQSYLNECGVLVQLD</sequence>
<keyword id="KW-0002">3D-structure</keyword>
<keyword id="KW-1072">Activation of host autophagy by virus</keyword>
<keyword id="KW-1015">Disulfide bond</keyword>
<keyword id="KW-1035">Host cytoplasm</keyword>
<keyword id="KW-1043">Host membrane</keyword>
<keyword id="KW-0945">Host-virus interaction</keyword>
<keyword id="KW-0378">Hydrolase</keyword>
<keyword id="KW-1090">Inhibition of host innate immune response by virus</keyword>
<keyword id="KW-1092">Inhibition of host IRF3 by virus</keyword>
<keyword id="KW-1113">Inhibition of host RLR pathway by virus</keyword>
<keyword id="KW-0472">Membrane</keyword>
<keyword id="KW-0479">Metal-binding</keyword>
<keyword id="KW-1127">Modulation of host ubiquitin pathway by viral deubiquitinase</keyword>
<keyword id="KW-1130">Modulation of host ubiquitin pathway by virus</keyword>
<keyword id="KW-0645">Protease</keyword>
<keyword id="KW-1185">Reference proteome</keyword>
<keyword id="KW-0677">Repeat</keyword>
<keyword id="KW-0688">Ribosomal frameshifting</keyword>
<keyword id="KW-0694">RNA-binding</keyword>
<keyword id="KW-0788">Thiol protease</keyword>
<keyword id="KW-0812">Transmembrane</keyword>
<keyword id="KW-1133">Transmembrane helix</keyword>
<keyword id="KW-0833">Ubl conjugation pathway</keyword>
<keyword id="KW-0899">Viral immunoevasion</keyword>
<keyword id="KW-0862">Zinc</keyword>
<keyword id="KW-0863">Zinc-finger</keyword>
<protein>
    <recommendedName>
        <fullName>Replicase polyprotein 1a</fullName>
        <shortName>pp1a</shortName>
    </recommendedName>
    <alternativeName>
        <fullName>ORF1a polyprotein</fullName>
    </alternativeName>
    <component>
        <recommendedName>
            <fullName>Non-structural protein 1</fullName>
            <shortName>nsp1</shortName>
        </recommendedName>
        <alternativeName>
            <fullName>p9</fullName>
        </alternativeName>
    </component>
    <component>
        <recommendedName>
            <fullName>Non-structural protein 2</fullName>
            <shortName>nsp2</shortName>
        </recommendedName>
        <alternativeName>
            <fullName>p87</fullName>
        </alternativeName>
    </component>
    <component>
        <recommendedName>
            <fullName>Non-structural protein 3</fullName>
            <shortName>nsp3</shortName>
            <ecNumber>3.4.19.12</ecNumber>
            <ecNumber>3.4.22.-</ecNumber>
        </recommendedName>
        <alternativeName>
            <fullName>PL1-PRO/PL2-PRO</fullName>
        </alternativeName>
        <alternativeName>
            <fullName>PLP1/PLP2</fullName>
        </alternativeName>
        <alternativeName>
            <fullName>Papain-like proteinases 1/2</fullName>
        </alternativeName>
        <alternativeName>
            <fullName>p195</fullName>
        </alternativeName>
    </component>
    <component>
        <recommendedName>
            <fullName>Non-structural protein 4</fullName>
            <shortName>nsp4</shortName>
        </recommendedName>
        <alternativeName>
            <fullName>Peptide HD2</fullName>
        </alternativeName>
    </component>
    <component>
        <recommendedName>
            <fullName>3C-like proteinase</fullName>
            <shortName>3CL-PRO</shortName>
            <shortName>3CLp</shortName>
            <ecNumber>3.4.22.-</ecNumber>
        </recommendedName>
        <alternativeName>
            <fullName>M-PRO</fullName>
        </alternativeName>
        <alternativeName>
            <fullName>nsp5</fullName>
        </alternativeName>
        <alternativeName>
            <fullName>p34</fullName>
        </alternativeName>
    </component>
    <component>
        <recommendedName>
            <fullName>Non-structural protein 6</fullName>
            <shortName>nsp6</shortName>
        </recommendedName>
    </component>
    <component>
        <recommendedName>
            <fullName>Non-structural protein 7</fullName>
            <shortName>nsp7</shortName>
        </recommendedName>
        <alternativeName>
            <fullName>p5</fullName>
        </alternativeName>
    </component>
    <component>
        <recommendedName>
            <fullName>Non-structural protein 8</fullName>
            <shortName>nsp8</shortName>
        </recommendedName>
        <alternativeName>
            <fullName>p23</fullName>
        </alternativeName>
    </component>
    <component>
        <recommendedName>
            <fullName>Non-structural protein 9</fullName>
            <shortName>nsp9</shortName>
        </recommendedName>
        <alternativeName>
            <fullName>p12</fullName>
        </alternativeName>
    </component>
    <component>
        <recommendedName>
            <fullName>Non-structural protein 10</fullName>
            <shortName>nsp10</shortName>
        </recommendedName>
        <alternativeName>
            <fullName>Growth factor-like peptide</fullName>
            <shortName>GFL</shortName>
        </alternativeName>
        <alternativeName>
            <fullName>p14</fullName>
        </alternativeName>
    </component>
    <component>
        <recommendedName>
            <fullName>Non-structural protein 11</fullName>
            <shortName>nsp11</shortName>
        </recommendedName>
    </component>
</protein>
<gene>
    <name type="ORF">1a</name>
</gene>